<name>PUR7_SHIDS</name>
<protein>
    <recommendedName>
        <fullName evidence="1">Phosphoribosylaminoimidazole-succinocarboxamide synthase</fullName>
        <ecNumber evidence="1">6.3.2.6</ecNumber>
    </recommendedName>
    <alternativeName>
        <fullName evidence="1">SAICAR synthetase</fullName>
    </alternativeName>
</protein>
<sequence length="237" mass="26969">MQKQAELYRGKAKTVYSTENPDLLVLEFRNDTSAGDGARIEQFDCKGMVNNKFNYFIMNKLAEAGIPTQMERLLSDTECLVKKLDMVPVECVVRNRAAGSLVKRLGIEEGIELNPPLFDLFLKNDAMHDPMVNESYCETFGWVSKENLARMKELTYKANDVLKKLFDDAGLILVDFKLEFGLYKGEVVLGDEFSPDGSRLWDKETLEKMDKDRFRQSLGGLIEAYEAVARRLGVQLD</sequence>
<accession>Q32D90</accession>
<gene>
    <name evidence="1" type="primary">purC</name>
    <name type="ordered locus">SDY_2664</name>
</gene>
<feature type="chain" id="PRO_1000018778" description="Phosphoribosylaminoimidazole-succinocarboxamide synthase">
    <location>
        <begin position="1"/>
        <end position="237"/>
    </location>
</feature>
<dbReference type="EC" id="6.3.2.6" evidence="1"/>
<dbReference type="EMBL" id="CP000034">
    <property type="protein sequence ID" value="ABB62715.1"/>
    <property type="molecule type" value="Genomic_DNA"/>
</dbReference>
<dbReference type="RefSeq" id="WP_011378820.1">
    <property type="nucleotide sequence ID" value="NC_007606.1"/>
</dbReference>
<dbReference type="RefSeq" id="YP_404206.1">
    <property type="nucleotide sequence ID" value="NC_007606.1"/>
</dbReference>
<dbReference type="SMR" id="Q32D90"/>
<dbReference type="STRING" id="300267.SDY_2664"/>
<dbReference type="EnsemblBacteria" id="ABB62715">
    <property type="protein sequence ID" value="ABB62715"/>
    <property type="gene ID" value="SDY_2664"/>
</dbReference>
<dbReference type="KEGG" id="sdy:SDY_2664"/>
<dbReference type="PATRIC" id="fig|300267.13.peg.3215"/>
<dbReference type="HOGENOM" id="CLU_061495_2_1_6"/>
<dbReference type="UniPathway" id="UPA00074">
    <property type="reaction ID" value="UER00131"/>
</dbReference>
<dbReference type="Proteomes" id="UP000002716">
    <property type="component" value="Chromosome"/>
</dbReference>
<dbReference type="GO" id="GO:0005829">
    <property type="term" value="C:cytosol"/>
    <property type="evidence" value="ECO:0007669"/>
    <property type="project" value="TreeGrafter"/>
</dbReference>
<dbReference type="GO" id="GO:0005524">
    <property type="term" value="F:ATP binding"/>
    <property type="evidence" value="ECO:0007669"/>
    <property type="project" value="UniProtKB-KW"/>
</dbReference>
<dbReference type="GO" id="GO:0004639">
    <property type="term" value="F:phosphoribosylaminoimidazolesuccinocarboxamide synthase activity"/>
    <property type="evidence" value="ECO:0007669"/>
    <property type="project" value="UniProtKB-UniRule"/>
</dbReference>
<dbReference type="GO" id="GO:0006189">
    <property type="term" value="P:'de novo' IMP biosynthetic process"/>
    <property type="evidence" value="ECO:0007669"/>
    <property type="project" value="UniProtKB-UniRule"/>
</dbReference>
<dbReference type="GO" id="GO:0009236">
    <property type="term" value="P:cobalamin biosynthetic process"/>
    <property type="evidence" value="ECO:0007669"/>
    <property type="project" value="InterPro"/>
</dbReference>
<dbReference type="CDD" id="cd01415">
    <property type="entry name" value="SAICAR_synt_PurC"/>
    <property type="match status" value="1"/>
</dbReference>
<dbReference type="FunFam" id="3.30.200.20:FF:000086">
    <property type="entry name" value="Phosphoribosylaminoimidazole-succinocarboxamide synthase"/>
    <property type="match status" value="1"/>
</dbReference>
<dbReference type="FunFam" id="3.30.470.20:FF:000006">
    <property type="entry name" value="Phosphoribosylaminoimidazole-succinocarboxamide synthase"/>
    <property type="match status" value="1"/>
</dbReference>
<dbReference type="Gene3D" id="3.30.470.20">
    <property type="entry name" value="ATP-grasp fold, B domain"/>
    <property type="match status" value="1"/>
</dbReference>
<dbReference type="Gene3D" id="3.30.200.20">
    <property type="entry name" value="Phosphorylase Kinase, domain 1"/>
    <property type="match status" value="1"/>
</dbReference>
<dbReference type="HAMAP" id="MF_00137">
    <property type="entry name" value="SAICAR_synth"/>
    <property type="match status" value="1"/>
</dbReference>
<dbReference type="InterPro" id="IPR028923">
    <property type="entry name" value="SAICAR_synt/ADE2_N"/>
</dbReference>
<dbReference type="InterPro" id="IPR033934">
    <property type="entry name" value="SAICAR_synt_PurC"/>
</dbReference>
<dbReference type="InterPro" id="IPR001636">
    <property type="entry name" value="SAICAR_synth"/>
</dbReference>
<dbReference type="InterPro" id="IPR050089">
    <property type="entry name" value="SAICAR_synthetase"/>
</dbReference>
<dbReference type="InterPro" id="IPR018236">
    <property type="entry name" value="SAICAR_synthetase_CS"/>
</dbReference>
<dbReference type="NCBIfam" id="TIGR00081">
    <property type="entry name" value="purC"/>
    <property type="match status" value="1"/>
</dbReference>
<dbReference type="PANTHER" id="PTHR43599">
    <property type="entry name" value="MULTIFUNCTIONAL PROTEIN ADE2"/>
    <property type="match status" value="1"/>
</dbReference>
<dbReference type="PANTHER" id="PTHR43599:SF3">
    <property type="entry name" value="SI:DKEY-6E2.2"/>
    <property type="match status" value="1"/>
</dbReference>
<dbReference type="Pfam" id="PF01259">
    <property type="entry name" value="SAICAR_synt"/>
    <property type="match status" value="1"/>
</dbReference>
<dbReference type="SUPFAM" id="SSF56104">
    <property type="entry name" value="SAICAR synthase-like"/>
    <property type="match status" value="1"/>
</dbReference>
<dbReference type="PROSITE" id="PS01057">
    <property type="entry name" value="SAICAR_SYNTHETASE_1"/>
    <property type="match status" value="1"/>
</dbReference>
<dbReference type="PROSITE" id="PS01058">
    <property type="entry name" value="SAICAR_SYNTHETASE_2"/>
    <property type="match status" value="1"/>
</dbReference>
<proteinExistence type="inferred from homology"/>
<comment type="catalytic activity">
    <reaction evidence="1">
        <text>5-amino-1-(5-phospho-D-ribosyl)imidazole-4-carboxylate + L-aspartate + ATP = (2S)-2-[5-amino-1-(5-phospho-beta-D-ribosyl)imidazole-4-carboxamido]succinate + ADP + phosphate + 2 H(+)</text>
        <dbReference type="Rhea" id="RHEA:22628"/>
        <dbReference type="ChEBI" id="CHEBI:15378"/>
        <dbReference type="ChEBI" id="CHEBI:29991"/>
        <dbReference type="ChEBI" id="CHEBI:30616"/>
        <dbReference type="ChEBI" id="CHEBI:43474"/>
        <dbReference type="ChEBI" id="CHEBI:58443"/>
        <dbReference type="ChEBI" id="CHEBI:77657"/>
        <dbReference type="ChEBI" id="CHEBI:456216"/>
        <dbReference type="EC" id="6.3.2.6"/>
    </reaction>
</comment>
<comment type="pathway">
    <text evidence="1">Purine metabolism; IMP biosynthesis via de novo pathway; 5-amino-1-(5-phospho-D-ribosyl)imidazole-4-carboxamide from 5-amino-1-(5-phospho-D-ribosyl)imidazole-4-carboxylate: step 1/2.</text>
</comment>
<comment type="similarity">
    <text evidence="1">Belongs to the SAICAR synthetase family.</text>
</comment>
<reference key="1">
    <citation type="journal article" date="2005" name="Nucleic Acids Res.">
        <title>Genome dynamics and diversity of Shigella species, the etiologic agents of bacillary dysentery.</title>
        <authorList>
            <person name="Yang F."/>
            <person name="Yang J."/>
            <person name="Zhang X."/>
            <person name="Chen L."/>
            <person name="Jiang Y."/>
            <person name="Yan Y."/>
            <person name="Tang X."/>
            <person name="Wang J."/>
            <person name="Xiong Z."/>
            <person name="Dong J."/>
            <person name="Xue Y."/>
            <person name="Zhu Y."/>
            <person name="Xu X."/>
            <person name="Sun L."/>
            <person name="Chen S."/>
            <person name="Nie H."/>
            <person name="Peng J."/>
            <person name="Xu J."/>
            <person name="Wang Y."/>
            <person name="Yuan Z."/>
            <person name="Wen Y."/>
            <person name="Yao Z."/>
            <person name="Shen Y."/>
            <person name="Qiang B."/>
            <person name="Hou Y."/>
            <person name="Yu J."/>
            <person name="Jin Q."/>
        </authorList>
    </citation>
    <scope>NUCLEOTIDE SEQUENCE [LARGE SCALE GENOMIC DNA]</scope>
    <source>
        <strain>Sd197</strain>
    </source>
</reference>
<evidence type="ECO:0000255" key="1">
    <source>
        <dbReference type="HAMAP-Rule" id="MF_00137"/>
    </source>
</evidence>
<organism>
    <name type="scientific">Shigella dysenteriae serotype 1 (strain Sd197)</name>
    <dbReference type="NCBI Taxonomy" id="300267"/>
    <lineage>
        <taxon>Bacteria</taxon>
        <taxon>Pseudomonadati</taxon>
        <taxon>Pseudomonadota</taxon>
        <taxon>Gammaproteobacteria</taxon>
        <taxon>Enterobacterales</taxon>
        <taxon>Enterobacteriaceae</taxon>
        <taxon>Shigella</taxon>
    </lineage>
</organism>
<keyword id="KW-0067">ATP-binding</keyword>
<keyword id="KW-0436">Ligase</keyword>
<keyword id="KW-0547">Nucleotide-binding</keyword>
<keyword id="KW-0658">Purine biosynthesis</keyword>
<keyword id="KW-1185">Reference proteome</keyword>